<keyword id="KW-0058">Aromatic hydrocarbons catabolism</keyword>
<keyword id="KW-0520">NAD</keyword>
<keyword id="KW-0560">Oxidoreductase</keyword>
<keyword id="KW-0614">Plasmid</keyword>
<accession>Q49KG0</accession>
<feature type="chain" id="PRO_0000337983" description="Acetaldehyde dehydrogenase">
    <location>
        <begin position="1"/>
        <end position="312"/>
    </location>
</feature>
<feature type="active site" description="Acyl-thioester intermediate" evidence="1">
    <location>
        <position position="132"/>
    </location>
</feature>
<feature type="binding site" evidence="1">
    <location>
        <begin position="12"/>
        <end position="15"/>
    </location>
    <ligand>
        <name>NAD(+)</name>
        <dbReference type="ChEBI" id="CHEBI:57540"/>
    </ligand>
</feature>
<feature type="binding site" evidence="1">
    <location>
        <begin position="163"/>
        <end position="171"/>
    </location>
    <ligand>
        <name>NAD(+)</name>
        <dbReference type="ChEBI" id="CHEBI:57540"/>
    </ligand>
</feature>
<feature type="binding site" evidence="1">
    <location>
        <position position="290"/>
    </location>
    <ligand>
        <name>NAD(+)</name>
        <dbReference type="ChEBI" id="CHEBI:57540"/>
    </ligand>
</feature>
<reference key="1">
    <citation type="submission" date="2004-11" db="EMBL/GenBank/DDBJ databases">
        <title>GJ31 meta-operon.</title>
        <authorList>
            <person name="Reineke W."/>
            <person name="Kunze M."/>
        </authorList>
    </citation>
    <scope>NUCLEOTIDE SEQUENCE [GENOMIC DNA]</scope>
    <source>
        <strain>GJ31</strain>
    </source>
</reference>
<protein>
    <recommendedName>
        <fullName evidence="1">Acetaldehyde dehydrogenase</fullName>
        <ecNumber evidence="1">1.2.1.10</ecNumber>
    </recommendedName>
    <alternativeName>
        <fullName evidence="1">Acetaldehyde dehydrogenase [acetylating]</fullName>
    </alternativeName>
</protein>
<comment type="catalytic activity">
    <reaction evidence="1">
        <text>acetaldehyde + NAD(+) + CoA = acetyl-CoA + NADH + H(+)</text>
        <dbReference type="Rhea" id="RHEA:23288"/>
        <dbReference type="ChEBI" id="CHEBI:15343"/>
        <dbReference type="ChEBI" id="CHEBI:15378"/>
        <dbReference type="ChEBI" id="CHEBI:57287"/>
        <dbReference type="ChEBI" id="CHEBI:57288"/>
        <dbReference type="ChEBI" id="CHEBI:57540"/>
        <dbReference type="ChEBI" id="CHEBI:57945"/>
        <dbReference type="EC" id="1.2.1.10"/>
    </reaction>
</comment>
<comment type="similarity">
    <text evidence="1">Belongs to the acetaldehyde dehydrogenase family.</text>
</comment>
<evidence type="ECO:0000255" key="1">
    <source>
        <dbReference type="HAMAP-Rule" id="MF_01657"/>
    </source>
</evidence>
<geneLocation type="plasmid">
    <name>pKW1</name>
</geneLocation>
<name>ACDH_PSEPU</name>
<sequence length="312" mass="32710">MTTKRKVAIVGSGNVGTDLMIKILRNAEHLEMAVMVGIDPASDGLARAGRMGVATTHEGVAGLVKMPEFADVDFVFDATSAGAHVKNDALLRATKPGIRVIDLTPAAIGPYCVPVVNLEQHVNAENLNMVTCGGQATIPMVAAVSRVAKVHYAEIVASIASKSAGPGTRANIDEFTETTSKAIEAIGGAAKGKAIIIMNPAEPPLMMRDTVYVLSEAADQDHVEASIEEMVAAVNAYVPGYRLKQKVQFEVIPDTAPLNIPGHGEFSGLKTSVFIEVEGAAHYLPAYAGNLDIMTSAALATAERMAQSMSQA</sequence>
<gene>
    <name type="primary">cbzQ</name>
</gene>
<proteinExistence type="inferred from homology"/>
<organism>
    <name type="scientific">Pseudomonas putida</name>
    <name type="common">Arthrobacter siderocapsulatus</name>
    <dbReference type="NCBI Taxonomy" id="303"/>
    <lineage>
        <taxon>Bacteria</taxon>
        <taxon>Pseudomonadati</taxon>
        <taxon>Pseudomonadota</taxon>
        <taxon>Gammaproteobacteria</taxon>
        <taxon>Pseudomonadales</taxon>
        <taxon>Pseudomonadaceae</taxon>
        <taxon>Pseudomonas</taxon>
    </lineage>
</organism>
<dbReference type="EC" id="1.2.1.10" evidence="1"/>
<dbReference type="EMBL" id="AY831461">
    <property type="protein sequence ID" value="AAX50131.1"/>
    <property type="molecule type" value="Genomic_DNA"/>
</dbReference>
<dbReference type="SMR" id="Q49KG0"/>
<dbReference type="GO" id="GO:0008774">
    <property type="term" value="F:acetaldehyde dehydrogenase (acetylating) activity"/>
    <property type="evidence" value="ECO:0007669"/>
    <property type="project" value="UniProtKB-UniRule"/>
</dbReference>
<dbReference type="GO" id="GO:0051287">
    <property type="term" value="F:NAD binding"/>
    <property type="evidence" value="ECO:0007669"/>
    <property type="project" value="UniProtKB-UniRule"/>
</dbReference>
<dbReference type="GO" id="GO:0009056">
    <property type="term" value="P:catabolic process"/>
    <property type="evidence" value="ECO:0007669"/>
    <property type="project" value="UniProtKB-KW"/>
</dbReference>
<dbReference type="CDD" id="cd23933">
    <property type="entry name" value="ALDH_C"/>
    <property type="match status" value="1"/>
</dbReference>
<dbReference type="FunFam" id="3.30.360.10:FF:000021">
    <property type="entry name" value="Acetaldehyde dehydrogenase"/>
    <property type="match status" value="1"/>
</dbReference>
<dbReference type="Gene3D" id="3.30.360.10">
    <property type="entry name" value="Dihydrodipicolinate Reductase, domain 2"/>
    <property type="match status" value="1"/>
</dbReference>
<dbReference type="Gene3D" id="3.40.50.720">
    <property type="entry name" value="NAD(P)-binding Rossmann-like Domain"/>
    <property type="match status" value="1"/>
</dbReference>
<dbReference type="HAMAP" id="MF_01657">
    <property type="entry name" value="Ac_ald_DH_ac"/>
    <property type="match status" value="1"/>
</dbReference>
<dbReference type="InterPro" id="IPR003361">
    <property type="entry name" value="Acetaldehyde_dehydrogenase"/>
</dbReference>
<dbReference type="InterPro" id="IPR015426">
    <property type="entry name" value="Acetylaldehyde_DH_C"/>
</dbReference>
<dbReference type="InterPro" id="IPR036291">
    <property type="entry name" value="NAD(P)-bd_dom_sf"/>
</dbReference>
<dbReference type="InterPro" id="IPR000534">
    <property type="entry name" value="Semialdehyde_DH_NAD-bd"/>
</dbReference>
<dbReference type="NCBIfam" id="TIGR03215">
    <property type="entry name" value="ac_ald_DH_ac"/>
    <property type="match status" value="1"/>
</dbReference>
<dbReference type="NCBIfam" id="NF006157">
    <property type="entry name" value="PRK08300.1"/>
    <property type="match status" value="1"/>
</dbReference>
<dbReference type="Pfam" id="PF09290">
    <property type="entry name" value="AcetDehyd-dimer"/>
    <property type="match status" value="1"/>
</dbReference>
<dbReference type="Pfam" id="PF01118">
    <property type="entry name" value="Semialdhyde_dh"/>
    <property type="match status" value="1"/>
</dbReference>
<dbReference type="PIRSF" id="PIRSF015689">
    <property type="entry name" value="Actaldh_dh_actl"/>
    <property type="match status" value="1"/>
</dbReference>
<dbReference type="SMART" id="SM00859">
    <property type="entry name" value="Semialdhyde_dh"/>
    <property type="match status" value="1"/>
</dbReference>
<dbReference type="SUPFAM" id="SSF55347">
    <property type="entry name" value="Glyceraldehyde-3-phosphate dehydrogenase-like, C-terminal domain"/>
    <property type="match status" value="1"/>
</dbReference>
<dbReference type="SUPFAM" id="SSF51735">
    <property type="entry name" value="NAD(P)-binding Rossmann-fold domains"/>
    <property type="match status" value="1"/>
</dbReference>